<dbReference type="EMBL" id="CP000446">
    <property type="protein sequence ID" value="ABI40241.1"/>
    <property type="molecule type" value="Genomic_DNA"/>
</dbReference>
<dbReference type="RefSeq" id="WP_011623913.1">
    <property type="nucleotide sequence ID" value="NC_008321.1"/>
</dbReference>
<dbReference type="SMR" id="Q0HFC6"/>
<dbReference type="KEGG" id="she:Shewmr4_3171"/>
<dbReference type="HOGENOM" id="CLU_092816_1_0_6"/>
<dbReference type="GO" id="GO:0009279">
    <property type="term" value="C:cell outer membrane"/>
    <property type="evidence" value="ECO:0007669"/>
    <property type="project" value="UniProtKB-SubCell"/>
</dbReference>
<dbReference type="GO" id="GO:0044874">
    <property type="term" value="P:lipoprotein localization to outer membrane"/>
    <property type="evidence" value="ECO:0007669"/>
    <property type="project" value="UniProtKB-UniRule"/>
</dbReference>
<dbReference type="GO" id="GO:0015031">
    <property type="term" value="P:protein transport"/>
    <property type="evidence" value="ECO:0007669"/>
    <property type="project" value="UniProtKB-KW"/>
</dbReference>
<dbReference type="CDD" id="cd16326">
    <property type="entry name" value="LolB"/>
    <property type="match status" value="1"/>
</dbReference>
<dbReference type="Gene3D" id="2.50.20.10">
    <property type="entry name" value="Lipoprotein localisation LolA/LolB/LppX"/>
    <property type="match status" value="1"/>
</dbReference>
<dbReference type="HAMAP" id="MF_00233">
    <property type="entry name" value="LolB"/>
    <property type="match status" value="1"/>
</dbReference>
<dbReference type="InterPro" id="IPR029046">
    <property type="entry name" value="LolA/LolB/LppX"/>
</dbReference>
<dbReference type="InterPro" id="IPR004565">
    <property type="entry name" value="OM_lipoprot_LolB"/>
</dbReference>
<dbReference type="NCBIfam" id="TIGR00548">
    <property type="entry name" value="lolB"/>
    <property type="match status" value="1"/>
</dbReference>
<dbReference type="Pfam" id="PF03550">
    <property type="entry name" value="LolB"/>
    <property type="match status" value="1"/>
</dbReference>
<dbReference type="SUPFAM" id="SSF89392">
    <property type="entry name" value="Prokaryotic lipoproteins and lipoprotein localization factors"/>
    <property type="match status" value="1"/>
</dbReference>
<dbReference type="PROSITE" id="PS51257">
    <property type="entry name" value="PROKAR_LIPOPROTEIN"/>
    <property type="match status" value="1"/>
</dbReference>
<protein>
    <recommendedName>
        <fullName evidence="1">Outer-membrane lipoprotein LolB</fullName>
    </recommendedName>
</protein>
<feature type="signal peptide" evidence="1">
    <location>
        <begin position="1"/>
        <end position="25"/>
    </location>
</feature>
<feature type="chain" id="PRO_1000021682" description="Outer-membrane lipoprotein LolB">
    <location>
        <begin position="26"/>
        <end position="214"/>
    </location>
</feature>
<feature type="lipid moiety-binding region" description="N-palmitoyl cysteine" evidence="1">
    <location>
        <position position="26"/>
    </location>
</feature>
<feature type="lipid moiety-binding region" description="S-diacylglycerol cysteine" evidence="1">
    <location>
        <position position="26"/>
    </location>
</feature>
<evidence type="ECO:0000255" key="1">
    <source>
        <dbReference type="HAMAP-Rule" id="MF_00233"/>
    </source>
</evidence>
<sequence>MNNLKRFTKSIFSCIALSGLLFLGGCETLPPTTDLSPITVDNAAQAKAWELQGKLAIRTPEDKLSANLYWRHSEERDELTLTTMLGTTVLTLDATPNSAHLHVDGKDFRDSNAQALLERVSGWSIPINDLPLWITGQIGALDRVLAVDSNGKTKQIQNSQTLPPWDVTFLSWQPQSGAEVPYQLKLERGDLQLKLQLNQWQALGKPSIMLGEKP</sequence>
<gene>
    <name evidence="1" type="primary">lolB</name>
    <name type="ordered locus">Shewmr4_3171</name>
</gene>
<proteinExistence type="inferred from homology"/>
<name>LOLB_SHESM</name>
<comment type="function">
    <text evidence="1">Plays a critical role in the incorporation of lipoproteins in the outer membrane after they are released by the LolA protein.</text>
</comment>
<comment type="subunit">
    <text evidence="1">Monomer.</text>
</comment>
<comment type="subcellular location">
    <subcellularLocation>
        <location evidence="1">Cell outer membrane</location>
        <topology evidence="1">Lipid-anchor</topology>
    </subcellularLocation>
</comment>
<comment type="similarity">
    <text evidence="1">Belongs to the LolB family.</text>
</comment>
<reference key="1">
    <citation type="submission" date="2006-08" db="EMBL/GenBank/DDBJ databases">
        <title>Complete sequence of Shewanella sp. MR-4.</title>
        <authorList>
            <consortium name="US DOE Joint Genome Institute"/>
            <person name="Copeland A."/>
            <person name="Lucas S."/>
            <person name="Lapidus A."/>
            <person name="Barry K."/>
            <person name="Detter J.C."/>
            <person name="Glavina del Rio T."/>
            <person name="Hammon N."/>
            <person name="Israni S."/>
            <person name="Dalin E."/>
            <person name="Tice H."/>
            <person name="Pitluck S."/>
            <person name="Kiss H."/>
            <person name="Brettin T."/>
            <person name="Bruce D."/>
            <person name="Han C."/>
            <person name="Tapia R."/>
            <person name="Gilna P."/>
            <person name="Schmutz J."/>
            <person name="Larimer F."/>
            <person name="Land M."/>
            <person name="Hauser L."/>
            <person name="Kyrpides N."/>
            <person name="Mikhailova N."/>
            <person name="Nealson K."/>
            <person name="Konstantinidis K."/>
            <person name="Klappenbach J."/>
            <person name="Tiedje J."/>
            <person name="Richardson P."/>
        </authorList>
    </citation>
    <scope>NUCLEOTIDE SEQUENCE [LARGE SCALE GENOMIC DNA]</scope>
    <source>
        <strain>MR-4</strain>
    </source>
</reference>
<keyword id="KW-0998">Cell outer membrane</keyword>
<keyword id="KW-0143">Chaperone</keyword>
<keyword id="KW-0449">Lipoprotein</keyword>
<keyword id="KW-0472">Membrane</keyword>
<keyword id="KW-0564">Palmitate</keyword>
<keyword id="KW-0653">Protein transport</keyword>
<keyword id="KW-0732">Signal</keyword>
<keyword id="KW-0813">Transport</keyword>
<accession>Q0HFC6</accession>
<organism>
    <name type="scientific">Shewanella sp. (strain MR-4)</name>
    <dbReference type="NCBI Taxonomy" id="60480"/>
    <lineage>
        <taxon>Bacteria</taxon>
        <taxon>Pseudomonadati</taxon>
        <taxon>Pseudomonadota</taxon>
        <taxon>Gammaproteobacteria</taxon>
        <taxon>Alteromonadales</taxon>
        <taxon>Shewanellaceae</taxon>
        <taxon>Shewanella</taxon>
    </lineage>
</organism>